<accession>O95470</accession>
<accession>B2RBD4</accession>
<accession>Q7Z732</accession>
<accession>Q9ULG8</accession>
<accession>Q9UN89</accession>
<feature type="chain" id="PRO_0000147012" description="Sphingosine-1-phosphate lyase 1">
    <location>
        <begin position="1"/>
        <end position="568"/>
    </location>
</feature>
<feature type="topological domain" description="Lumenal" evidence="3">
    <location>
        <begin position="1"/>
        <end position="40"/>
    </location>
</feature>
<feature type="transmembrane region" description="Helical; Signal-anchor for type III membrane protein" evidence="3">
    <location>
        <begin position="41"/>
        <end position="61"/>
    </location>
</feature>
<feature type="topological domain" description="Cytoplasmic" evidence="3">
    <location>
        <begin position="62"/>
        <end position="568"/>
    </location>
</feature>
<feature type="modified residue" description="N6-(pyridoxal phosphate)lysine; alternate">
    <location>
        <position position="353"/>
    </location>
</feature>
<feature type="modified residue" description="N6-acetyllysine; alternate" evidence="18">
    <location>
        <position position="353"/>
    </location>
</feature>
<feature type="modified residue" description="3'-nitrotyrosine" evidence="17">
    <location>
        <position position="356"/>
    </location>
</feature>
<feature type="modified residue" description="3'-nitrotyrosine" evidence="17">
    <location>
        <position position="366"/>
    </location>
</feature>
<feature type="modified residue" description="Phosphoserine" evidence="19">
    <location>
        <position position="564"/>
    </location>
</feature>
<feature type="sequence variant" id="VAR_048875" description="In dbSNP:rs12770335." evidence="13">
    <original>V</original>
    <variation>L</variation>
    <location>
        <position position="21"/>
    </location>
</feature>
<feature type="sequence variant" id="VAR_081454" description="Found in patients with atypical form of axonal peripheral neuropathy, characterized by acute or subacute onset and episodes of recurrent mononeuropathy; likely pathogenic; dbSNP:rs201533115." evidence="8">
    <original>I</original>
    <variation>T</variation>
    <location>
        <position position="184"/>
    </location>
</feature>
<feature type="sequence variant" id="VAR_079213" description="In RENI; decreased protein abundance; increased aggregation; decreased sphinganine-1-phosphate aldolase activity; dbSNP:rs769259446." evidence="9 10 13">
    <original>R</original>
    <variation>Q</variation>
    <location>
        <position position="222"/>
    </location>
</feature>
<feature type="sequence variant" id="VAR_079214" description="In RENI; dbSNP:rs1131692255." evidence="9">
    <original>R</original>
    <variation>W</variation>
    <location>
        <position position="222"/>
    </location>
</feature>
<feature type="sequence variant" id="VAR_081455" description="In RENI; uncertain significance; dbSNP:rs1437439236." evidence="12">
    <original>R</original>
    <variation>W</variation>
    <location>
        <position position="340"/>
    </location>
</feature>
<feature type="sequence variant" id="VAR_079215" description="In RENI; decreased protein abundance in cells of patients homozygous for the mutation; increased aggregation; decreased sphinganine-1-phosphate aldolase activity; dbSNP:rs1131692256." evidence="9">
    <original>S</original>
    <variation>I</variation>
    <location>
        <position position="346"/>
    </location>
</feature>
<feature type="sequence variant" id="VAR_081456" description="Found in patients with atypical form of axonal peripheral neuropathy, characterized by acute or subacute onset and episodes of recurrent mononeuropathy; likely pathogenic." evidence="8">
    <location>
        <begin position="361"/>
        <end position="568"/>
    </location>
</feature>
<feature type="sequence variant" id="VAR_079216" description="In RENI; uncertain significance; dbSNP:rs779485098." evidence="9">
    <original>Y</original>
    <variation>C</variation>
    <location>
        <position position="416"/>
    </location>
</feature>
<feature type="sequence variant" id="VAR_079217" description="In RENI." evidence="11">
    <location>
        <begin position="505"/>
        <end position="568"/>
    </location>
</feature>
<feature type="sequence variant" id="VAR_079218" description="In RENI; decreased protein abundance." evidence="10">
    <location>
        <position position="545"/>
    </location>
</feature>
<feature type="mutagenesis site" description="No effect on the sphinganine-1-phosphate aldolase activity; no effect on protein abundance." evidence="9">
    <original>E</original>
    <variation>G</variation>
    <location>
        <position position="132"/>
    </location>
</feature>
<feature type="mutagenesis site" description="Loss of sphinganine-1-phosphate aldolase activity." evidence="4">
    <original>C</original>
    <variation>G</variation>
    <location>
        <position position="218"/>
    </location>
</feature>
<feature type="mutagenesis site" description="Almost no sphinganine-1-phosphate aldolase activity." evidence="4">
    <original>C</original>
    <variation>S</variation>
    <location>
        <position position="317"/>
    </location>
</feature>
<feature type="mutagenesis site" description="Loss of sphinganine-1-phosphate aldolase activity." evidence="5">
    <original>K</original>
    <variation>L</variation>
    <location>
        <position position="353"/>
    </location>
</feature>
<feature type="sequence conflict" description="In Ref. 1; CAA09590." evidence="15" ref="1">
    <original>C</original>
    <variation>A</variation>
    <location>
        <position position="404"/>
    </location>
</feature>
<feature type="helix" evidence="21">
    <location>
        <begin position="123"/>
        <end position="131"/>
    </location>
</feature>
<feature type="helix" evidence="21">
    <location>
        <begin position="132"/>
        <end position="134"/>
    </location>
</feature>
<feature type="turn" evidence="21">
    <location>
        <begin position="135"/>
        <end position="137"/>
    </location>
</feature>
<feature type="helix" evidence="21">
    <location>
        <begin position="138"/>
        <end position="141"/>
    </location>
</feature>
<feature type="strand" evidence="21">
    <location>
        <begin position="145"/>
        <end position="148"/>
    </location>
</feature>
<feature type="helix" evidence="21">
    <location>
        <begin position="154"/>
        <end position="166"/>
    </location>
</feature>
<feature type="turn" evidence="21">
    <location>
        <begin position="167"/>
        <end position="169"/>
    </location>
</feature>
<feature type="turn" evidence="21">
    <location>
        <begin position="175"/>
        <end position="177"/>
    </location>
</feature>
<feature type="helix" evidence="21">
    <location>
        <begin position="179"/>
        <end position="195"/>
    </location>
</feature>
<feature type="strand" evidence="21">
    <location>
        <begin position="203"/>
        <end position="209"/>
    </location>
</feature>
<feature type="helix" evidence="21">
    <location>
        <begin position="210"/>
        <end position="227"/>
    </location>
</feature>
<feature type="strand" evidence="21">
    <location>
        <begin position="234"/>
        <end position="238"/>
    </location>
</feature>
<feature type="helix" evidence="21">
    <location>
        <begin position="244"/>
        <end position="252"/>
    </location>
</feature>
<feature type="strand" evidence="21">
    <location>
        <begin position="255"/>
        <end position="259"/>
    </location>
</feature>
<feature type="strand" evidence="21">
    <location>
        <begin position="265"/>
        <end position="267"/>
    </location>
</feature>
<feature type="helix" evidence="21">
    <location>
        <begin position="269"/>
        <end position="274"/>
    </location>
</feature>
<feature type="strand" evidence="21">
    <location>
        <begin position="280"/>
        <end position="286"/>
    </location>
</feature>
<feature type="turn" evidence="21">
    <location>
        <begin position="290"/>
        <end position="292"/>
    </location>
</feature>
<feature type="helix" evidence="21">
    <location>
        <begin position="298"/>
        <end position="308"/>
    </location>
</feature>
<feature type="strand" evidence="21">
    <location>
        <begin position="312"/>
        <end position="315"/>
    </location>
</feature>
<feature type="turn" evidence="21">
    <location>
        <begin position="317"/>
        <end position="319"/>
    </location>
</feature>
<feature type="helix" evidence="21">
    <location>
        <begin position="320"/>
        <end position="323"/>
    </location>
</feature>
<feature type="helix" evidence="21">
    <location>
        <begin position="326"/>
        <end position="329"/>
    </location>
</feature>
<feature type="strand" evidence="21">
    <location>
        <begin position="344"/>
        <end position="349"/>
    </location>
</feature>
<feature type="strand" evidence="21">
    <location>
        <begin position="362"/>
        <end position="368"/>
    </location>
</feature>
<feature type="helix" evidence="21">
    <location>
        <begin position="369"/>
        <end position="372"/>
    </location>
</feature>
<feature type="turn" evidence="21">
    <location>
        <begin position="373"/>
        <end position="375"/>
    </location>
</feature>
<feature type="strand" evidence="21">
    <location>
        <begin position="377"/>
        <end position="381"/>
    </location>
</feature>
<feature type="strand" evidence="21">
    <location>
        <begin position="387"/>
        <end position="392"/>
    </location>
</feature>
<feature type="helix" evidence="21">
    <location>
        <begin position="398"/>
        <end position="434"/>
    </location>
</feature>
<feature type="strand" evidence="21">
    <location>
        <begin position="448"/>
        <end position="454"/>
    </location>
</feature>
<feature type="strand" evidence="21">
    <location>
        <begin position="456"/>
        <end position="458"/>
    </location>
</feature>
<feature type="helix" evidence="21">
    <location>
        <begin position="460"/>
        <end position="469"/>
    </location>
</feature>
<feature type="strand" evidence="20">
    <location>
        <begin position="475"/>
        <end position="477"/>
    </location>
</feature>
<feature type="turn" evidence="20">
    <location>
        <begin position="478"/>
        <end position="481"/>
    </location>
</feature>
<feature type="strand" evidence="21">
    <location>
        <begin position="483"/>
        <end position="486"/>
    </location>
</feature>
<feature type="helix" evidence="21">
    <location>
        <begin position="489"/>
        <end position="494"/>
    </location>
</feature>
<feature type="helix" evidence="21">
    <location>
        <begin position="497"/>
        <end position="512"/>
    </location>
</feature>
<feature type="helix" evidence="21">
    <location>
        <begin position="522"/>
        <end position="531"/>
    </location>
</feature>
<feature type="helix" evidence="21">
    <location>
        <begin position="535"/>
        <end position="549"/>
    </location>
</feature>
<organism>
    <name type="scientific">Homo sapiens</name>
    <name type="common">Human</name>
    <dbReference type="NCBI Taxonomy" id="9606"/>
    <lineage>
        <taxon>Eukaryota</taxon>
        <taxon>Metazoa</taxon>
        <taxon>Chordata</taxon>
        <taxon>Craniata</taxon>
        <taxon>Vertebrata</taxon>
        <taxon>Euteleostomi</taxon>
        <taxon>Mammalia</taxon>
        <taxon>Eutheria</taxon>
        <taxon>Euarchontoglires</taxon>
        <taxon>Primates</taxon>
        <taxon>Haplorrhini</taxon>
        <taxon>Catarrhini</taxon>
        <taxon>Hominidae</taxon>
        <taxon>Homo</taxon>
    </lineage>
</organism>
<protein>
    <recommendedName>
        <fullName evidence="15">Sphingosine-1-phosphate lyase 1</fullName>
        <shortName evidence="15">S1PL</shortName>
        <shortName evidence="15">SP-lyase 1</shortName>
        <shortName evidence="15">SPL 1</shortName>
        <shortName>hSPL</shortName>
        <ecNumber evidence="4 6 7 9">4.1.2.27</ecNumber>
    </recommendedName>
    <alternativeName>
        <fullName>Sphingosine-1-phosphate aldolase</fullName>
    </alternativeName>
</protein>
<proteinExistence type="evidence at protein level"/>
<evidence type="ECO:0000250" key="1">
    <source>
        <dbReference type="UniProtKB" id="Q8R0X7"/>
    </source>
</evidence>
<evidence type="ECO:0000250" key="2">
    <source>
        <dbReference type="UniProtKB" id="Q9V7Y2"/>
    </source>
</evidence>
<evidence type="ECO:0000255" key="3"/>
<evidence type="ECO:0000269" key="4">
    <source>
    </source>
</evidence>
<evidence type="ECO:0000269" key="5">
    <source>
    </source>
</evidence>
<evidence type="ECO:0000269" key="6">
    <source>
    </source>
</evidence>
<evidence type="ECO:0000269" key="7">
    <source>
    </source>
</evidence>
<evidence type="ECO:0000269" key="8">
    <source>
    </source>
</evidence>
<evidence type="ECO:0000269" key="9">
    <source>
    </source>
</evidence>
<evidence type="ECO:0000269" key="10">
    <source>
    </source>
</evidence>
<evidence type="ECO:0000269" key="11">
    <source>
    </source>
</evidence>
<evidence type="ECO:0000269" key="12">
    <source>
    </source>
</evidence>
<evidence type="ECO:0000269" key="13">
    <source>
    </source>
</evidence>
<evidence type="ECO:0000303" key="14">
    <source>
    </source>
</evidence>
<evidence type="ECO:0000305" key="15"/>
<evidence type="ECO:0000312" key="16">
    <source>
        <dbReference type="HGNC" id="HGNC:10817"/>
    </source>
</evidence>
<evidence type="ECO:0007744" key="17">
    <source>
    </source>
</evidence>
<evidence type="ECO:0007744" key="18">
    <source>
    </source>
</evidence>
<evidence type="ECO:0007744" key="19">
    <source>
    </source>
</evidence>
<evidence type="ECO:0007829" key="20">
    <source>
        <dbReference type="PDB" id="4Q6R"/>
    </source>
</evidence>
<evidence type="ECO:0007829" key="21">
    <source>
        <dbReference type="PDB" id="8AYF"/>
    </source>
</evidence>
<dbReference type="EC" id="4.1.2.27" evidence="4 6 7 9"/>
<dbReference type="EMBL" id="AJ011304">
    <property type="protein sequence ID" value="CAA09590.2"/>
    <property type="molecule type" value="mRNA"/>
</dbReference>
<dbReference type="EMBL" id="AF144638">
    <property type="protein sequence ID" value="AAD44755.1"/>
    <property type="molecule type" value="mRNA"/>
</dbReference>
<dbReference type="EMBL" id="AB033078">
    <property type="protein sequence ID" value="BAA86566.1"/>
    <property type="status" value="ALT_INIT"/>
    <property type="molecule type" value="mRNA"/>
</dbReference>
<dbReference type="EMBL" id="AK314615">
    <property type="protein sequence ID" value="BAG37181.1"/>
    <property type="molecule type" value="mRNA"/>
</dbReference>
<dbReference type="EMBL" id="CH471083">
    <property type="protein sequence ID" value="EAW54414.1"/>
    <property type="molecule type" value="Genomic_DNA"/>
</dbReference>
<dbReference type="EMBL" id="BC052991">
    <property type="protein sequence ID" value="AAH52991.1"/>
    <property type="molecule type" value="mRNA"/>
</dbReference>
<dbReference type="CCDS" id="CCDS31216.1"/>
<dbReference type="RefSeq" id="NP_003892.2">
    <property type="nucleotide sequence ID" value="NM_003901.3"/>
</dbReference>
<dbReference type="RefSeq" id="XP_005270320.1">
    <property type="nucleotide sequence ID" value="XM_005270263.2"/>
</dbReference>
<dbReference type="RefSeq" id="XP_011538618.1">
    <property type="nucleotide sequence ID" value="XM_011540316.3"/>
</dbReference>
<dbReference type="RefSeq" id="XP_011538619.1">
    <property type="nucleotide sequence ID" value="XM_011540317.2"/>
</dbReference>
<dbReference type="RefSeq" id="XP_047281937.1">
    <property type="nucleotide sequence ID" value="XM_047425981.1"/>
</dbReference>
<dbReference type="RefSeq" id="XP_054223076.1">
    <property type="nucleotide sequence ID" value="XM_054367101.1"/>
</dbReference>
<dbReference type="RefSeq" id="XP_054223077.1">
    <property type="nucleotide sequence ID" value="XM_054367102.1"/>
</dbReference>
<dbReference type="RefSeq" id="XP_054223078.1">
    <property type="nucleotide sequence ID" value="XM_054367103.1"/>
</dbReference>
<dbReference type="RefSeq" id="XP_054223079.1">
    <property type="nucleotide sequence ID" value="XM_054367104.1"/>
</dbReference>
<dbReference type="PDB" id="4Q6R">
    <property type="method" value="X-ray"/>
    <property type="resolution" value="2.40 A"/>
    <property type="chains" value="A/B=62-568"/>
</dbReference>
<dbReference type="PDB" id="8AYF">
    <property type="method" value="X-ray"/>
    <property type="resolution" value="1.84 A"/>
    <property type="chains" value="A/B=81-568"/>
</dbReference>
<dbReference type="PDBsum" id="4Q6R"/>
<dbReference type="PDBsum" id="8AYF"/>
<dbReference type="SMR" id="O95470"/>
<dbReference type="BioGRID" id="114398">
    <property type="interactions" value="250"/>
</dbReference>
<dbReference type="FunCoup" id="O95470">
    <property type="interactions" value="1917"/>
</dbReference>
<dbReference type="IntAct" id="O95470">
    <property type="interactions" value="147"/>
</dbReference>
<dbReference type="MINT" id="O95470"/>
<dbReference type="STRING" id="9606.ENSP00000362298"/>
<dbReference type="BindingDB" id="O95470"/>
<dbReference type="ChEMBL" id="CHEMBL3286061"/>
<dbReference type="DrugBank" id="DB06297">
    <property type="generic name" value="LX-2931"/>
</dbReference>
<dbReference type="DrugBank" id="DB00114">
    <property type="generic name" value="Pyridoxal phosphate"/>
</dbReference>
<dbReference type="DrugCentral" id="O95470"/>
<dbReference type="GuidetoPHARMACOLOGY" id="2522"/>
<dbReference type="SwissLipids" id="SLP:000000107"/>
<dbReference type="GlyGen" id="O95470">
    <property type="glycosylation" value="2 sites, 1 N-linked glycan (1 site), 1 O-linked glycan (1 site)"/>
</dbReference>
<dbReference type="iPTMnet" id="O95470"/>
<dbReference type="MetOSite" id="O95470"/>
<dbReference type="PhosphoSitePlus" id="O95470"/>
<dbReference type="SwissPalm" id="O95470"/>
<dbReference type="BioMuta" id="SGPL1"/>
<dbReference type="jPOST" id="O95470"/>
<dbReference type="MassIVE" id="O95470"/>
<dbReference type="PaxDb" id="9606-ENSP00000362298"/>
<dbReference type="PRIDE" id="O95470"/>
<dbReference type="ProteomicsDB" id="50902"/>
<dbReference type="Pumba" id="O95470"/>
<dbReference type="Antibodypedia" id="14941">
    <property type="antibodies" value="178 antibodies from 24 providers"/>
</dbReference>
<dbReference type="DNASU" id="8879"/>
<dbReference type="Ensembl" id="ENST00000373202.8">
    <property type="protein sequence ID" value="ENSP00000362298.3"/>
    <property type="gene ID" value="ENSG00000166224.19"/>
</dbReference>
<dbReference type="Ensembl" id="ENST00000697928.1">
    <property type="protein sequence ID" value="ENSP00000513482.1"/>
    <property type="gene ID" value="ENSG00000166224.19"/>
</dbReference>
<dbReference type="Ensembl" id="ENST00000697931.1">
    <property type="protein sequence ID" value="ENSP00000513485.1"/>
    <property type="gene ID" value="ENSG00000166224.19"/>
</dbReference>
<dbReference type="Ensembl" id="ENST00000697932.1">
    <property type="protein sequence ID" value="ENSP00000513486.1"/>
    <property type="gene ID" value="ENSG00000166224.19"/>
</dbReference>
<dbReference type="GeneID" id="8879"/>
<dbReference type="KEGG" id="hsa:8879"/>
<dbReference type="MANE-Select" id="ENST00000373202.8">
    <property type="protein sequence ID" value="ENSP00000362298.3"/>
    <property type="RefSeq nucleotide sequence ID" value="NM_003901.4"/>
    <property type="RefSeq protein sequence ID" value="NP_003892.2"/>
</dbReference>
<dbReference type="UCSC" id="uc001jrm.4">
    <property type="organism name" value="human"/>
</dbReference>
<dbReference type="AGR" id="HGNC:10817"/>
<dbReference type="CTD" id="8879"/>
<dbReference type="DisGeNET" id="8879"/>
<dbReference type="GeneCards" id="SGPL1"/>
<dbReference type="GeneReviews" id="SGPL1"/>
<dbReference type="HGNC" id="HGNC:10817">
    <property type="gene designation" value="SGPL1"/>
</dbReference>
<dbReference type="HPA" id="ENSG00000166224">
    <property type="expression patterns" value="Low tissue specificity"/>
</dbReference>
<dbReference type="MalaCards" id="SGPL1"/>
<dbReference type="MIM" id="603729">
    <property type="type" value="gene"/>
</dbReference>
<dbReference type="MIM" id="617575">
    <property type="type" value="phenotype"/>
</dbReference>
<dbReference type="neXtProt" id="NX_O95470"/>
<dbReference type="OpenTargets" id="ENSG00000166224"/>
<dbReference type="Orphanet" id="506334">
    <property type="disease" value="Familial steroid-resistant nephrotic syndrome with adrenal insufficiency"/>
</dbReference>
<dbReference type="PharmGKB" id="PA35725"/>
<dbReference type="VEuPathDB" id="HostDB:ENSG00000166224"/>
<dbReference type="eggNOG" id="KOG1383">
    <property type="taxonomic scope" value="Eukaryota"/>
</dbReference>
<dbReference type="GeneTree" id="ENSGT00390000000046"/>
<dbReference type="HOGENOM" id="CLU_028929_1_1_1"/>
<dbReference type="InParanoid" id="O95470"/>
<dbReference type="OMA" id="FKDHQFT"/>
<dbReference type="OrthoDB" id="10254570at2759"/>
<dbReference type="PAN-GO" id="O95470">
    <property type="GO annotations" value="3 GO annotations based on evolutionary models"/>
</dbReference>
<dbReference type="PhylomeDB" id="O95470"/>
<dbReference type="TreeFam" id="TF300777"/>
<dbReference type="BRENDA" id="4.1.2.27">
    <property type="organism ID" value="2681"/>
</dbReference>
<dbReference type="PathwayCommons" id="O95470"/>
<dbReference type="Reactome" id="R-HSA-9845614">
    <property type="pathway name" value="Sphingolipid catabolism"/>
</dbReference>
<dbReference type="SABIO-RK" id="O95470"/>
<dbReference type="SignaLink" id="O95470"/>
<dbReference type="UniPathway" id="UPA00222"/>
<dbReference type="BioGRID-ORCS" id="8879">
    <property type="hits" value="10 hits in 1158 CRISPR screens"/>
</dbReference>
<dbReference type="ChiTaRS" id="SGPL1">
    <property type="organism name" value="human"/>
</dbReference>
<dbReference type="EvolutionaryTrace" id="O95470"/>
<dbReference type="GeneWiki" id="SGPL1"/>
<dbReference type="GenomeRNAi" id="8879"/>
<dbReference type="Pharos" id="O95470">
    <property type="development level" value="Tchem"/>
</dbReference>
<dbReference type="PRO" id="PR:O95470"/>
<dbReference type="Proteomes" id="UP000005640">
    <property type="component" value="Chromosome 10"/>
</dbReference>
<dbReference type="RNAct" id="O95470">
    <property type="molecule type" value="protein"/>
</dbReference>
<dbReference type="Bgee" id="ENSG00000166224">
    <property type="expression patterns" value="Expressed in esophagus squamous epithelium and 189 other cell types or tissues"/>
</dbReference>
<dbReference type="ExpressionAtlas" id="O95470">
    <property type="expression patterns" value="baseline and differential"/>
</dbReference>
<dbReference type="GO" id="GO:0005783">
    <property type="term" value="C:endoplasmic reticulum"/>
    <property type="evidence" value="ECO:0000314"/>
    <property type="project" value="UniProtKB"/>
</dbReference>
<dbReference type="GO" id="GO:0005789">
    <property type="term" value="C:endoplasmic reticulum membrane"/>
    <property type="evidence" value="ECO:0000304"/>
    <property type="project" value="Reactome"/>
</dbReference>
<dbReference type="GO" id="GO:0030170">
    <property type="term" value="F:pyridoxal phosphate binding"/>
    <property type="evidence" value="ECO:0007669"/>
    <property type="project" value="InterPro"/>
</dbReference>
<dbReference type="GO" id="GO:0008117">
    <property type="term" value="F:sphinganine-1-phosphate aldolase activity"/>
    <property type="evidence" value="ECO:0000314"/>
    <property type="project" value="UniProtKB"/>
</dbReference>
<dbReference type="GO" id="GO:0008209">
    <property type="term" value="P:androgen metabolic process"/>
    <property type="evidence" value="ECO:0007669"/>
    <property type="project" value="Ensembl"/>
</dbReference>
<dbReference type="GO" id="GO:0097190">
    <property type="term" value="P:apoptotic signaling pathway"/>
    <property type="evidence" value="ECO:0000314"/>
    <property type="project" value="UniProtKB"/>
</dbReference>
<dbReference type="GO" id="GO:0006672">
    <property type="term" value="P:ceramide metabolic process"/>
    <property type="evidence" value="ECO:0000314"/>
    <property type="project" value="UniProtKB"/>
</dbReference>
<dbReference type="GO" id="GO:0008210">
    <property type="term" value="P:estrogen metabolic process"/>
    <property type="evidence" value="ECO:0007669"/>
    <property type="project" value="Ensembl"/>
</dbReference>
<dbReference type="GO" id="GO:0060325">
    <property type="term" value="P:face morphogenesis"/>
    <property type="evidence" value="ECO:0007669"/>
    <property type="project" value="Ensembl"/>
</dbReference>
<dbReference type="GO" id="GO:0006631">
    <property type="term" value="P:fatty acid metabolic process"/>
    <property type="evidence" value="ECO:0000314"/>
    <property type="project" value="UniProtKB"/>
</dbReference>
<dbReference type="GO" id="GO:0010761">
    <property type="term" value="P:fibroblast migration"/>
    <property type="evidence" value="ECO:0007669"/>
    <property type="project" value="Ensembl"/>
</dbReference>
<dbReference type="GO" id="GO:0030097">
    <property type="term" value="P:hemopoiesis"/>
    <property type="evidence" value="ECO:0007669"/>
    <property type="project" value="Ensembl"/>
</dbReference>
<dbReference type="GO" id="GO:0001822">
    <property type="term" value="P:kidney development"/>
    <property type="evidence" value="ECO:0007669"/>
    <property type="project" value="Ensembl"/>
</dbReference>
<dbReference type="GO" id="GO:0033327">
    <property type="term" value="P:Leydig cell differentiation"/>
    <property type="evidence" value="ECO:0007669"/>
    <property type="project" value="Ensembl"/>
</dbReference>
<dbReference type="GO" id="GO:0001553">
    <property type="term" value="P:luteinization"/>
    <property type="evidence" value="ECO:0007669"/>
    <property type="project" value="Ensembl"/>
</dbReference>
<dbReference type="GO" id="GO:0048008">
    <property type="term" value="P:platelet-derived growth factor receptor signaling pathway"/>
    <property type="evidence" value="ECO:0007669"/>
    <property type="project" value="Ensembl"/>
</dbReference>
<dbReference type="GO" id="GO:0009791">
    <property type="term" value="P:post-embryonic development"/>
    <property type="evidence" value="ECO:0007669"/>
    <property type="project" value="Ensembl"/>
</dbReference>
<dbReference type="GO" id="GO:0040014">
    <property type="term" value="P:regulation of multicellular organism growth"/>
    <property type="evidence" value="ECO:0007669"/>
    <property type="project" value="Ensembl"/>
</dbReference>
<dbReference type="GO" id="GO:0060021">
    <property type="term" value="P:roof of mouth development"/>
    <property type="evidence" value="ECO:0007669"/>
    <property type="project" value="Ensembl"/>
</dbReference>
<dbReference type="GO" id="GO:0048705">
    <property type="term" value="P:skeletal system morphogenesis"/>
    <property type="evidence" value="ECO:0007669"/>
    <property type="project" value="Ensembl"/>
</dbReference>
<dbReference type="GO" id="GO:0007283">
    <property type="term" value="P:spermatogenesis"/>
    <property type="evidence" value="ECO:0007669"/>
    <property type="project" value="Ensembl"/>
</dbReference>
<dbReference type="GO" id="GO:0030149">
    <property type="term" value="P:sphingolipid catabolic process"/>
    <property type="evidence" value="ECO:0000314"/>
    <property type="project" value="UniProtKB"/>
</dbReference>
<dbReference type="GO" id="GO:0001570">
    <property type="term" value="P:vasculogenesis"/>
    <property type="evidence" value="ECO:0007669"/>
    <property type="project" value="Ensembl"/>
</dbReference>
<dbReference type="CDD" id="cd06450">
    <property type="entry name" value="DOPA_deC_like"/>
    <property type="match status" value="1"/>
</dbReference>
<dbReference type="FunFam" id="3.90.1150.10:FF:000020">
    <property type="entry name" value="Sphingosine-1-phosphate lyase 1"/>
    <property type="match status" value="1"/>
</dbReference>
<dbReference type="FunFam" id="6.10.140.2150:FF:000001">
    <property type="entry name" value="Sphingosine-1-phosphate lyase 1"/>
    <property type="match status" value="1"/>
</dbReference>
<dbReference type="FunFam" id="3.40.640.10:FF:000020">
    <property type="entry name" value="sphingosine-1-phosphate lyase 1"/>
    <property type="match status" value="1"/>
</dbReference>
<dbReference type="Gene3D" id="6.10.140.2150">
    <property type="match status" value="1"/>
</dbReference>
<dbReference type="Gene3D" id="3.90.1150.10">
    <property type="entry name" value="Aspartate Aminotransferase, domain 1"/>
    <property type="match status" value="1"/>
</dbReference>
<dbReference type="Gene3D" id="3.40.640.10">
    <property type="entry name" value="Type I PLP-dependent aspartate aminotransferase-like (Major domain)"/>
    <property type="match status" value="1"/>
</dbReference>
<dbReference type="InterPro" id="IPR050477">
    <property type="entry name" value="GrpII_AminoAcid_Decarb"/>
</dbReference>
<dbReference type="InterPro" id="IPR002129">
    <property type="entry name" value="PyrdxlP-dep_de-COase"/>
</dbReference>
<dbReference type="InterPro" id="IPR015424">
    <property type="entry name" value="PyrdxlP-dep_Trfase"/>
</dbReference>
<dbReference type="InterPro" id="IPR015421">
    <property type="entry name" value="PyrdxlP-dep_Trfase_major"/>
</dbReference>
<dbReference type="InterPro" id="IPR015422">
    <property type="entry name" value="PyrdxlP-dep_Trfase_small"/>
</dbReference>
<dbReference type="PANTHER" id="PTHR42735">
    <property type="match status" value="1"/>
</dbReference>
<dbReference type="PANTHER" id="PTHR42735:SF6">
    <property type="entry name" value="SPHINGOSINE-1-PHOSPHATE LYASE 1"/>
    <property type="match status" value="1"/>
</dbReference>
<dbReference type="Pfam" id="PF00282">
    <property type="entry name" value="Pyridoxal_deC"/>
    <property type="match status" value="1"/>
</dbReference>
<dbReference type="SUPFAM" id="SSF53383">
    <property type="entry name" value="PLP-dependent transferases"/>
    <property type="match status" value="1"/>
</dbReference>
<reference key="1">
    <citation type="journal article" date="2000" name="Biochim. Biophys. Acta">
        <title>Human sphingosine-1-phosphate lyase: cDNA cloning, functional expression studies and mapping to chromosome 10q22.</title>
        <authorList>
            <person name="Van Veldhoven P.P."/>
            <person name="Gijsbers S."/>
            <person name="Mannaerts G.P."/>
            <person name="Vermeesch J.R."/>
            <person name="Brys V."/>
        </authorList>
    </citation>
    <scope>NUCLEOTIDE SEQUENCE [MRNA]</scope>
    <scope>CATALYTIC ACTIVITY</scope>
    <scope>PATHWAY</scope>
    <scope>FUNCTION</scope>
    <scope>MUTAGENESIS OF CYS-218 AND CYS-317</scope>
    <scope>TISSUE SPECIFICITY</scope>
</reference>
<reference key="2">
    <citation type="journal article" date="2004" name="J. Biol. Chem.">
        <title>Sphingosine-phosphate lyase enhances stress-induced ceramide generation and apoptosis.</title>
        <authorList>
            <person name="Reiss U."/>
            <person name="Oskouian B."/>
            <person name="Zhou J."/>
            <person name="Gupta V."/>
            <person name="Sooriyakumaran P."/>
            <person name="Kelly S."/>
            <person name="Wang E."/>
            <person name="Merrill A.H. Jr."/>
            <person name="Saba J.D."/>
        </authorList>
    </citation>
    <scope>NUCLEOTIDE SEQUENCE [MRNA]</scope>
    <scope>FUNCTION</scope>
    <scope>SUBCELLULAR LOCATION</scope>
    <scope>MUTAGENESIS OF LYS-353</scope>
</reference>
<reference key="3">
    <citation type="journal article" date="1999" name="DNA Res.">
        <title>Prediction of the coding sequences of unidentified human genes. XV. The complete sequences of 100 new cDNA clones from brain which code for large proteins in vitro.</title>
        <authorList>
            <person name="Nagase T."/>
            <person name="Ishikawa K."/>
            <person name="Kikuno R."/>
            <person name="Hirosawa M."/>
            <person name="Nomura N."/>
            <person name="Ohara O."/>
        </authorList>
    </citation>
    <scope>NUCLEOTIDE SEQUENCE [LARGE SCALE MRNA]</scope>
    <source>
        <tissue>Brain</tissue>
    </source>
</reference>
<reference key="4">
    <citation type="journal article" date="2004" name="Nat. Genet.">
        <title>Complete sequencing and characterization of 21,243 full-length human cDNAs.</title>
        <authorList>
            <person name="Ota T."/>
            <person name="Suzuki Y."/>
            <person name="Nishikawa T."/>
            <person name="Otsuki T."/>
            <person name="Sugiyama T."/>
            <person name="Irie R."/>
            <person name="Wakamatsu A."/>
            <person name="Hayashi K."/>
            <person name="Sato H."/>
            <person name="Nagai K."/>
            <person name="Kimura K."/>
            <person name="Makita H."/>
            <person name="Sekine M."/>
            <person name="Obayashi M."/>
            <person name="Nishi T."/>
            <person name="Shibahara T."/>
            <person name="Tanaka T."/>
            <person name="Ishii S."/>
            <person name="Yamamoto J."/>
            <person name="Saito K."/>
            <person name="Kawai Y."/>
            <person name="Isono Y."/>
            <person name="Nakamura Y."/>
            <person name="Nagahari K."/>
            <person name="Murakami K."/>
            <person name="Yasuda T."/>
            <person name="Iwayanagi T."/>
            <person name="Wagatsuma M."/>
            <person name="Shiratori A."/>
            <person name="Sudo H."/>
            <person name="Hosoiri T."/>
            <person name="Kaku Y."/>
            <person name="Kodaira H."/>
            <person name="Kondo H."/>
            <person name="Sugawara M."/>
            <person name="Takahashi M."/>
            <person name="Kanda K."/>
            <person name="Yokoi T."/>
            <person name="Furuya T."/>
            <person name="Kikkawa E."/>
            <person name="Omura Y."/>
            <person name="Abe K."/>
            <person name="Kamihara K."/>
            <person name="Katsuta N."/>
            <person name="Sato K."/>
            <person name="Tanikawa M."/>
            <person name="Yamazaki M."/>
            <person name="Ninomiya K."/>
            <person name="Ishibashi T."/>
            <person name="Yamashita H."/>
            <person name="Murakawa K."/>
            <person name="Fujimori K."/>
            <person name="Tanai H."/>
            <person name="Kimata M."/>
            <person name="Watanabe M."/>
            <person name="Hiraoka S."/>
            <person name="Chiba Y."/>
            <person name="Ishida S."/>
            <person name="Ono Y."/>
            <person name="Takiguchi S."/>
            <person name="Watanabe S."/>
            <person name="Yosida M."/>
            <person name="Hotuta T."/>
            <person name="Kusano J."/>
            <person name="Kanehori K."/>
            <person name="Takahashi-Fujii A."/>
            <person name="Hara H."/>
            <person name="Tanase T.-O."/>
            <person name="Nomura Y."/>
            <person name="Togiya S."/>
            <person name="Komai F."/>
            <person name="Hara R."/>
            <person name="Takeuchi K."/>
            <person name="Arita M."/>
            <person name="Imose N."/>
            <person name="Musashino K."/>
            <person name="Yuuki H."/>
            <person name="Oshima A."/>
            <person name="Sasaki N."/>
            <person name="Aotsuka S."/>
            <person name="Yoshikawa Y."/>
            <person name="Matsunawa H."/>
            <person name="Ichihara T."/>
            <person name="Shiohata N."/>
            <person name="Sano S."/>
            <person name="Moriya S."/>
            <person name="Momiyama H."/>
            <person name="Satoh N."/>
            <person name="Takami S."/>
            <person name="Terashima Y."/>
            <person name="Suzuki O."/>
            <person name="Nakagawa S."/>
            <person name="Senoh A."/>
            <person name="Mizoguchi H."/>
            <person name="Goto Y."/>
            <person name="Shimizu F."/>
            <person name="Wakebe H."/>
            <person name="Hishigaki H."/>
            <person name="Watanabe T."/>
            <person name="Sugiyama A."/>
            <person name="Takemoto M."/>
            <person name="Kawakami B."/>
            <person name="Yamazaki M."/>
            <person name="Watanabe K."/>
            <person name="Kumagai A."/>
            <person name="Itakura S."/>
            <person name="Fukuzumi Y."/>
            <person name="Fujimori Y."/>
            <person name="Komiyama M."/>
            <person name="Tashiro H."/>
            <person name="Tanigami A."/>
            <person name="Fujiwara T."/>
            <person name="Ono T."/>
            <person name="Yamada K."/>
            <person name="Fujii Y."/>
            <person name="Ozaki K."/>
            <person name="Hirao M."/>
            <person name="Ohmori Y."/>
            <person name="Kawabata A."/>
            <person name="Hikiji T."/>
            <person name="Kobatake N."/>
            <person name="Inagaki H."/>
            <person name="Ikema Y."/>
            <person name="Okamoto S."/>
            <person name="Okitani R."/>
            <person name="Kawakami T."/>
            <person name="Noguchi S."/>
            <person name="Itoh T."/>
            <person name="Shigeta K."/>
            <person name="Senba T."/>
            <person name="Matsumura K."/>
            <person name="Nakajima Y."/>
            <person name="Mizuno T."/>
            <person name="Morinaga M."/>
            <person name="Sasaki M."/>
            <person name="Togashi T."/>
            <person name="Oyama M."/>
            <person name="Hata H."/>
            <person name="Watanabe M."/>
            <person name="Komatsu T."/>
            <person name="Mizushima-Sugano J."/>
            <person name="Satoh T."/>
            <person name="Shirai Y."/>
            <person name="Takahashi Y."/>
            <person name="Nakagawa K."/>
            <person name="Okumura K."/>
            <person name="Nagase T."/>
            <person name="Nomura N."/>
            <person name="Kikuchi H."/>
            <person name="Masuho Y."/>
            <person name="Yamashita R."/>
            <person name="Nakai K."/>
            <person name="Yada T."/>
            <person name="Nakamura Y."/>
            <person name="Ohara O."/>
            <person name="Isogai T."/>
            <person name="Sugano S."/>
        </authorList>
    </citation>
    <scope>NUCLEOTIDE SEQUENCE [LARGE SCALE MRNA]</scope>
    <source>
        <tissue>Testis</tissue>
    </source>
</reference>
<reference key="5">
    <citation type="submission" date="2005-07" db="EMBL/GenBank/DDBJ databases">
        <authorList>
            <person name="Mural R.J."/>
            <person name="Istrail S."/>
            <person name="Sutton G.G."/>
            <person name="Florea L."/>
            <person name="Halpern A.L."/>
            <person name="Mobarry C.M."/>
            <person name="Lippert R."/>
            <person name="Walenz B."/>
            <person name="Shatkay H."/>
            <person name="Dew I."/>
            <person name="Miller J.R."/>
            <person name="Flanigan M.J."/>
            <person name="Edwards N.J."/>
            <person name="Bolanos R."/>
            <person name="Fasulo D."/>
            <person name="Halldorsson B.V."/>
            <person name="Hannenhalli S."/>
            <person name="Turner R."/>
            <person name="Yooseph S."/>
            <person name="Lu F."/>
            <person name="Nusskern D.R."/>
            <person name="Shue B.C."/>
            <person name="Zheng X.H."/>
            <person name="Zhong F."/>
            <person name="Delcher A.L."/>
            <person name="Huson D.H."/>
            <person name="Kravitz S.A."/>
            <person name="Mouchard L."/>
            <person name="Reinert K."/>
            <person name="Remington K.A."/>
            <person name="Clark A.G."/>
            <person name="Waterman M.S."/>
            <person name="Eichler E.E."/>
            <person name="Adams M.D."/>
            <person name="Hunkapiller M.W."/>
            <person name="Myers E.W."/>
            <person name="Venter J.C."/>
        </authorList>
    </citation>
    <scope>NUCLEOTIDE SEQUENCE [LARGE SCALE GENOMIC DNA]</scope>
</reference>
<reference key="6">
    <citation type="journal article" date="2004" name="Genome Res.">
        <title>The status, quality, and expansion of the NIH full-length cDNA project: the Mammalian Gene Collection (MGC).</title>
        <authorList>
            <consortium name="The MGC Project Team"/>
        </authorList>
    </citation>
    <scope>NUCLEOTIDE SEQUENCE [LARGE SCALE MRNA]</scope>
    <source>
        <tissue>Skin</tissue>
    </source>
</reference>
<reference key="7">
    <citation type="journal article" date="2006" name="Anal. Biochem.">
        <title>Nitroproteins from a human pituitary adenoma tissue discovered with a nitrotyrosine affinity column and tandem mass spectrometry.</title>
        <authorList>
            <person name="Zhan X."/>
            <person name="Desiderio D.M."/>
        </authorList>
    </citation>
    <scope>NITRATION [LARGE SCALE ANALYSIS] AT TYR-356 AND TYR-366</scope>
    <scope>IDENTIFICATION BY MASS SPECTROMETRY [LARGE SCALE ANALYSIS]</scope>
    <source>
        <tissue>Pituitary adenoma</tissue>
    </source>
</reference>
<reference key="8">
    <citation type="journal article" date="2008" name="Mol. Cell">
        <title>Kinase-selective enrichment enables quantitative phosphoproteomics of the kinome across the cell cycle.</title>
        <authorList>
            <person name="Daub H."/>
            <person name="Olsen J.V."/>
            <person name="Bairlein M."/>
            <person name="Gnad F."/>
            <person name="Oppermann F.S."/>
            <person name="Korner R."/>
            <person name="Greff Z."/>
            <person name="Keri G."/>
            <person name="Stemmann O."/>
            <person name="Mann M."/>
        </authorList>
    </citation>
    <scope>IDENTIFICATION BY MASS SPECTROMETRY [LARGE SCALE ANALYSIS]</scope>
    <source>
        <tissue>Cervix carcinoma</tissue>
    </source>
</reference>
<reference key="9">
    <citation type="journal article" date="2009" name="Sci. Signal.">
        <title>Quantitative phosphoproteomic analysis of T cell receptor signaling reveals system-wide modulation of protein-protein interactions.</title>
        <authorList>
            <person name="Mayya V."/>
            <person name="Lundgren D.H."/>
            <person name="Hwang S.-I."/>
            <person name="Rezaul K."/>
            <person name="Wu L."/>
            <person name="Eng J.K."/>
            <person name="Rodionov V."/>
            <person name="Han D.K."/>
        </authorList>
    </citation>
    <scope>PHOSPHORYLATION [LARGE SCALE ANALYSIS] AT SER-564</scope>
    <scope>IDENTIFICATION BY MASS SPECTROMETRY [LARGE SCALE ANALYSIS]</scope>
    <source>
        <tissue>Leukemic T-cell</tissue>
    </source>
</reference>
<reference key="10">
    <citation type="journal article" date="2009" name="Science">
        <title>Lysine acetylation targets protein complexes and co-regulates major cellular functions.</title>
        <authorList>
            <person name="Choudhary C."/>
            <person name="Kumar C."/>
            <person name="Gnad F."/>
            <person name="Nielsen M.L."/>
            <person name="Rehman M."/>
            <person name="Walther T.C."/>
            <person name="Olsen J.V."/>
            <person name="Mann M."/>
        </authorList>
    </citation>
    <scope>ACETYLATION [LARGE SCALE ANALYSIS] AT LYS-353</scope>
    <scope>IDENTIFICATION BY MASS SPECTROMETRY [LARGE SCALE ANALYSIS]</scope>
</reference>
<reference key="11">
    <citation type="journal article" date="2010" name="Sci. Signal.">
        <title>Quantitative phosphoproteomics reveals widespread full phosphorylation site occupancy during mitosis.</title>
        <authorList>
            <person name="Olsen J.V."/>
            <person name="Vermeulen M."/>
            <person name="Santamaria A."/>
            <person name="Kumar C."/>
            <person name="Miller M.L."/>
            <person name="Jensen L.J."/>
            <person name="Gnad F."/>
            <person name="Cox J."/>
            <person name="Jensen T.S."/>
            <person name="Nigg E.A."/>
            <person name="Brunak S."/>
            <person name="Mann M."/>
        </authorList>
    </citation>
    <scope>IDENTIFICATION BY MASS SPECTROMETRY [LARGE SCALE ANALYSIS]</scope>
    <source>
        <tissue>Cervix carcinoma</tissue>
    </source>
</reference>
<reference key="12">
    <citation type="journal article" date="2011" name="BMC Syst. Biol.">
        <title>Initial characterization of the human central proteome.</title>
        <authorList>
            <person name="Burkard T.R."/>
            <person name="Planyavsky M."/>
            <person name="Kaupe I."/>
            <person name="Breitwieser F.P."/>
            <person name="Buerckstuemmer T."/>
            <person name="Bennett K.L."/>
            <person name="Superti-Furga G."/>
            <person name="Colinge J."/>
        </authorList>
    </citation>
    <scope>IDENTIFICATION BY MASS SPECTROMETRY [LARGE SCALE ANALYSIS]</scope>
</reference>
<reference key="13">
    <citation type="journal article" date="2012" name="Mol. Cancer Ther.">
        <title>First evidence of sphingosine 1-phosphate lyase protein expression and activity downregulation in human neoplasm: implication for resistance to therapeutics in prostate cancer.</title>
        <authorList>
            <person name="Brizuela L."/>
            <person name="Ader I."/>
            <person name="Mazerolles C."/>
            <person name="Bocquet M."/>
            <person name="Malavaud B."/>
            <person name="Cuvillier O."/>
        </authorList>
    </citation>
    <scope>CATALYTIC ACTIVITY</scope>
</reference>
<reference key="14">
    <citation type="journal article" date="2014" name="J. Med. Chem.">
        <title>Orally active 7-substituted (4-benzylphthalazin-1-yl)-2-methylpiperazin-1-yl]nicotinonitriles as active-site inhibitors of sphingosine 1-phosphate lyase for the treatment of multiple sclerosis.</title>
        <authorList>
            <person name="Weiler S."/>
            <person name="Braendlin N."/>
            <person name="Beerli C."/>
            <person name="Bergsdorf C."/>
            <person name="Schubart A."/>
            <person name="Srinivas H."/>
            <person name="Oberhauser B."/>
            <person name="Billich A."/>
        </authorList>
    </citation>
    <scope>X-RAY CRYSTALLOGRAPHY (2.4 ANGSTROMS) OF 62-568 IN COMPLEX WITH PYRIDOXAL PHOSPHATE AND SYNTHETIC INHIBITOR</scope>
    <scope>CATALYTIC ACTIVITY</scope>
    <scope>PATHWAY</scope>
    <scope>FUNCTION</scope>
    <scope>COFACTOR</scope>
    <scope>SUBUNIT</scope>
    <scope>BIOPHYSICOCHEMICAL PROPERTIES</scope>
</reference>
<reference key="15">
    <citation type="journal article" date="2017" name="Hum. Mutat.">
        <title>Deficiency of the sphingosine-1-phosphate lyase SGPL1 is associated with congenital nephrotic syndrome and congenital adrenal calcifications.</title>
        <authorList>
            <person name="Janecke A.R."/>
            <person name="Xu R."/>
            <person name="Steichen-Gersdorf E."/>
            <person name="Waldegger S."/>
            <person name="Entenmann A."/>
            <person name="Giner T."/>
            <person name="Krainer I."/>
            <person name="Huber L.A."/>
            <person name="Hess M.W."/>
            <person name="Frishberg Y."/>
            <person name="Barash H."/>
            <person name="Tzur S."/>
            <person name="Schreyer-Shafir N."/>
            <person name="Sukenik-Halevy R."/>
            <person name="Zehavi T."/>
            <person name="Raas-Rothschild A."/>
            <person name="Mao C."/>
            <person name="Mueller T."/>
        </authorList>
    </citation>
    <scope>INVOLVEMENT IN RENI</scope>
    <scope>VARIANT RENI 505-ARG--HIS-568 DEL</scope>
</reference>
<reference key="16">
    <citation type="journal article" date="2017" name="J. Clin. Invest.">
        <title>Mutations in sphingosine-1-phosphate lyase cause nephrosis with ichthyosis and adrenal insufficiency.</title>
        <authorList>
            <person name="Lovric S."/>
            <person name="Goncalves S."/>
            <person name="Gee H.Y."/>
            <person name="Oskouian B."/>
            <person name="Srinivas H."/>
            <person name="Choi W.I."/>
            <person name="Shril S."/>
            <person name="Ashraf S."/>
            <person name="Tan W."/>
            <person name="Rao J."/>
            <person name="Airik M."/>
            <person name="Schapiro D."/>
            <person name="Braun D.A."/>
            <person name="Sadowski C.E."/>
            <person name="Widmeier E."/>
            <person name="Jobst-Schwan T."/>
            <person name="Schmidt J.M."/>
            <person name="Girik V."/>
            <person name="Capitani G."/>
            <person name="Suh J.H."/>
            <person name="Lachaussee N."/>
            <person name="Arrondel C."/>
            <person name="Patat J."/>
            <person name="Gribouval O."/>
            <person name="Furlano M."/>
            <person name="Boyer O."/>
            <person name="Schmitt A."/>
            <person name="Vuiblet V."/>
            <person name="Hashmi S."/>
            <person name="Wilcken R."/>
            <person name="Bernier F.P."/>
            <person name="Innes A.M."/>
            <person name="Parboosingh J.S."/>
            <person name="Lamont R.E."/>
            <person name="Midgley J.P."/>
            <person name="Wright N."/>
            <person name="Majewski J."/>
            <person name="Zenker M."/>
            <person name="Schaefer F."/>
            <person name="Kuss N."/>
            <person name="Greil J."/>
            <person name="Giese T."/>
            <person name="Schwarz K."/>
            <person name="Catheline V."/>
            <person name="Schanze D."/>
            <person name="Franke I."/>
            <person name="Sznajer Y."/>
            <person name="Truant A.S."/>
            <person name="Adams B."/>
            <person name="Desir J."/>
            <person name="Biemann R."/>
            <person name="Pei Y."/>
            <person name="Ars E."/>
            <person name="Lloberas N."/>
            <person name="Madrid A."/>
            <person name="Dharnidharka V.R."/>
            <person name="Connolly A.M."/>
            <person name="Willing M.C."/>
            <person name="Cooper M.A."/>
            <person name="Lifton R.P."/>
            <person name="Simons M."/>
            <person name="Riezman H."/>
            <person name="Antignac C."/>
            <person name="Saba J.D."/>
            <person name="Hildebrandt F."/>
        </authorList>
    </citation>
    <scope>INVOLVEMENT IN RENI</scope>
    <scope>VARIANTS RENI GLN-222; TRP-222; ILE-346 AND CYS-416</scope>
    <scope>CHARACTERIZATION OF VARIANTS RENI GLN-222 AND ILE-346</scope>
    <scope>FUNCTION</scope>
    <scope>CATALYTIC ACTIVITY</scope>
    <scope>PATHWAY</scope>
    <scope>MUTAGENESIS OF GLU-132</scope>
</reference>
<reference key="17">
    <citation type="journal article" date="2017" name="J. Clin. Invest.">
        <title>Sphingosine-1-phosphate lyase mutations cause primary adrenal insufficiency and steroid-resistant nephrotic syndrome.</title>
        <authorList>
            <person name="Prasad R."/>
            <person name="Hadjidemetriou I."/>
            <person name="Maharaj A."/>
            <person name="Meimaridou E."/>
            <person name="Buonocore F."/>
            <person name="Saleem M."/>
            <person name="Hurcombe J."/>
            <person name="Bierzynska A."/>
            <person name="Barbagelata E."/>
            <person name="Bergada I."/>
            <person name="Cassinelli H."/>
            <person name="Das U."/>
            <person name="Krone R."/>
            <person name="Hacihamdioglu B."/>
            <person name="Sari E."/>
            <person name="Yesilkaya E."/>
            <person name="Storr H.L."/>
            <person name="Clemente M."/>
            <person name="Fernandez-Cancio M."/>
            <person name="Camats N."/>
            <person name="Ram N."/>
            <person name="Achermann J.C."/>
            <person name="Van Veldhoven P.P."/>
            <person name="Guasti L."/>
            <person name="Braslavsky D."/>
            <person name="Guran T."/>
            <person name="Metherell L.A."/>
        </authorList>
    </citation>
    <scope>INVOLVEMENT IN RENI</scope>
    <scope>VARIANTS RENI GLN-222 AND PHE-545 DEL</scope>
    <scope>CHARACTERIZATION OF VARIANTS RENI GLN-222 AND PHE-545 DEL</scope>
    <scope>TISSUE SPECIFICITY</scope>
</reference>
<reference key="18">
    <citation type="journal article" date="2018" name="Clin. Kidney J.">
        <title>Nephrotic syndrome and adrenal insufficiency caused by a variant in SGPL1.</title>
        <authorList>
            <person name="Linhares N.D."/>
            <person name="Arantes R.R."/>
            <person name="Araujo S.A."/>
            <person name="Pena S.D.J."/>
        </authorList>
    </citation>
    <scope>INVOLVEMENT IN RENI</scope>
    <scope>VARIANT RENI TRP-340</scope>
</reference>
<reference key="19">
    <citation type="journal article" date="2017" name="Neurology">
        <title>Sphingosine 1-phosphate lyase deficiency causes Charcot-Marie-Tooth neuropathy.</title>
        <authorList>
            <person name="Atkinson D."/>
            <person name="Nikodinovic Glumac J."/>
            <person name="Asselbergh B."/>
            <person name="Ermanoska B."/>
            <person name="Blocquel D."/>
            <person name="Steiner R."/>
            <person name="Estrada-Cuzcano A."/>
            <person name="Peeters K."/>
            <person name="Ooms T."/>
            <person name="De Vriendt E."/>
            <person name="Yang X.L."/>
            <person name="Hornemann T."/>
            <person name="Milic Rasic V."/>
            <person name="Jordanova A."/>
        </authorList>
    </citation>
    <scope>VARIANTS THR-184 AND 361-SER--HIS-568 DEL</scope>
</reference>
<reference key="20">
    <citation type="journal article" date="2019" name="J. Clin. Endocrinol. Metab.">
        <title>SGPL1 Deficiency: A Rare Cause of Primary Adrenal Insufficiency.</title>
        <authorList>
            <person name="Settas N."/>
            <person name="Persky R."/>
            <person name="Faucz F.R."/>
            <person name="Sheanon N."/>
            <person name="Voutetakis A."/>
            <person name="Lodish M."/>
            <person name="Metherell L.A."/>
            <person name="Stratakis C.A."/>
        </authorList>
    </citation>
    <scope>VARIANTS LEU-21 AND GLN-222</scope>
</reference>
<reference key="21">
    <citation type="journal article" date="2019" name="J. Lipid Res.">
        <title>Fifty years of lyase and a moment of truth: Sphingosine phosphate lyase from discovery to disease.</title>
        <authorList>
            <person name="Saba J.D."/>
        </authorList>
    </citation>
    <scope>REVIEW OF FUNCTION</scope>
</reference>
<sequence>MPSTDLLMLKAFEPYLEILEVYSTKAKNYVNGHCTKYEPWQLIAWSVVWTLLIVWGYEFVFQPESLWSRFKKKCFKLTRKMPIIGRKIQDKLNKTKDDISKNMSFLKVDKEYVKALPSQGLSSSAVLEKLKEYSSMDAFWQEGRASGTVYSGEEKLTELLVKAYGDFAWSNPLHPDIFPGLRKIEAEIVRIACSLFNGGPDSCGCVTSGGTESILMACKAYRDLAFEKGIKTPEIVAPQSAHAAFNKAASYFGMKIVRVPLTKMMEVDVRAMRRAISRNTAMLVCSTPQFPHGVIDPVPEVAKLAVKYKIPLHVDACLGGFLIVFMEKAGYPLEHPFDFRVKGVTSISADTHKYGYAPKGSSLVLYSDKKYRNYQFFVDTDWQGGIYASPTIAGSRPGGISAACWAALMHFGENGYVEATKQIIKTARFLKSELENIKGIFVFGNPQLSVIALGSRDFDIYRLSNLMTAKGWNLNQLQFPPSIHFCITLLHARKRVAIQFLKDIRESVTQIMKNPKAKTTGMGAIYGMAQTTVDRNMVAELSSVFLDSLYSTDTVTQGSQMNGSPKPH</sequence>
<gene>
    <name evidence="16" type="primary">SGPL1</name>
    <name evidence="14" type="synonym">KIAA1252</name>
</gene>
<comment type="function">
    <text evidence="1 2 4 5 7 9">Cleaves phosphorylated sphingoid bases (PSBs), such as sphingosine-1-phosphate, into fatty aldehydes and phosphoethanolamine. Elevates stress-induced ceramide production and apoptosis (PubMed:11018465, PubMed:14570870, PubMed:24809814, PubMed:28165339). Required for global lipid homeostasis in liver and cholesterol homeostasis in fibroblasts. Involved in the regulation of pro-inflammatory response and neutrophil trafficking. Modulates neuronal autophagy via phosphoethanolamine production which regulates accumulation of aggregate-prone proteins such as APP (By similarity). Seems to play a role in establishing neuronal contact sites and axonal maintenance (By similarity).</text>
</comment>
<comment type="catalytic activity">
    <reaction evidence="4 6 7 9">
        <text>sphinganine 1-phosphate = hexadecanal + phosphoethanolamine</text>
        <dbReference type="Rhea" id="RHEA:18593"/>
        <dbReference type="ChEBI" id="CHEBI:17600"/>
        <dbReference type="ChEBI" id="CHEBI:57939"/>
        <dbReference type="ChEBI" id="CHEBI:58190"/>
        <dbReference type="EC" id="4.1.2.27"/>
    </reaction>
    <physiologicalReaction direction="left-to-right" evidence="4 6">
        <dbReference type="Rhea" id="RHEA:18594"/>
    </physiologicalReaction>
</comment>
<comment type="catalytic activity">
    <reaction evidence="6">
        <text>sphing-4-enine 1-phosphate = (2E)-hexadecenal + phosphoethanolamine</text>
        <dbReference type="Rhea" id="RHEA:33507"/>
        <dbReference type="ChEBI" id="CHEBI:17585"/>
        <dbReference type="ChEBI" id="CHEBI:58190"/>
        <dbReference type="ChEBI" id="CHEBI:60119"/>
        <dbReference type="EC" id="4.1.2.27"/>
    </reaction>
    <physiologicalReaction direction="left-to-right" evidence="6">
        <dbReference type="Rhea" id="RHEA:33508"/>
    </physiologicalReaction>
</comment>
<comment type="cofactor">
    <cofactor evidence="7">
        <name>pyridoxal 5'-phosphate</name>
        <dbReference type="ChEBI" id="CHEBI:597326"/>
    </cofactor>
</comment>
<comment type="biophysicochemical properties">
    <kinetics>
        <KM evidence="7">5.2 uM for sphingosine 1-phosphate</KM>
    </kinetics>
</comment>
<comment type="pathway">
    <text evidence="4 7 9">Lipid metabolism; sphingolipid metabolism.</text>
</comment>
<comment type="subunit">
    <text evidence="7">Homodimer.</text>
</comment>
<comment type="interaction">
    <interactant intactId="EBI-1046170">
        <id>O95470</id>
    </interactant>
    <interactant intactId="EBI-2808854">
        <id>Q92482</id>
        <label>AQP3</label>
    </interactant>
    <organismsDiffer>false</organismsDiffer>
    <experiments>3</experiments>
</comment>
<comment type="interaction">
    <interactant intactId="EBI-1046170">
        <id>O95470</id>
    </interactant>
    <interactant intactId="EBI-17444777">
        <id>O43315</id>
        <label>AQP9</label>
    </interactant>
    <organismsDiffer>false</organismsDiffer>
    <experiments>3</experiments>
</comment>
<comment type="interaction">
    <interactant intactId="EBI-1046170">
        <id>O95470</id>
    </interactant>
    <interactant intactId="EBI-707714">
        <id>Q92843</id>
        <label>BCL2L2</label>
    </interactant>
    <organismsDiffer>false</organismsDiffer>
    <experiments>3</experiments>
</comment>
<comment type="interaction">
    <interactant intactId="EBI-1046170">
        <id>O95470</id>
    </interactant>
    <interactant intactId="EBI-12244618">
        <id>Q6PL45-2</id>
        <label>BRICD5</label>
    </interactant>
    <organismsDiffer>false</organismsDiffer>
    <experiments>3</experiments>
</comment>
<comment type="interaction">
    <interactant intactId="EBI-1046170">
        <id>O95470</id>
    </interactant>
    <interactant intactId="EBI-10271156">
        <id>Q8NHW4</id>
        <label>CCL4L2</label>
    </interactant>
    <organismsDiffer>false</organismsDiffer>
    <experiments>3</experiments>
</comment>
<comment type="interaction">
    <interactant intactId="EBI-1046170">
        <id>O95470</id>
    </interactant>
    <interactant intactId="EBI-12256978">
        <id>Q8N6F1-2</id>
        <label>CLDN19</label>
    </interactant>
    <organismsDiffer>false</organismsDiffer>
    <experiments>3</experiments>
</comment>
<comment type="interaction">
    <interactant intactId="EBI-1046170">
        <id>O95470</id>
    </interactant>
    <interactant intactId="EBI-1753674">
        <id>P52803</id>
        <label>EFNA5</label>
    </interactant>
    <organismsDiffer>false</organismsDiffer>
    <experiments>3</experiments>
</comment>
<comment type="interaction">
    <interactant intactId="EBI-1046170">
        <id>O95470</id>
    </interactant>
    <interactant intactId="EBI-711490">
        <id>Q9UKR5</id>
        <label>ERG28</label>
    </interactant>
    <organismsDiffer>false</organismsDiffer>
    <experiments>3</experiments>
</comment>
<comment type="interaction">
    <interactant intactId="EBI-1046170">
        <id>O95470</id>
    </interactant>
    <interactant intactId="EBI-11337888">
        <id>Q7L5A8</id>
        <label>FA2H</label>
    </interactant>
    <organismsDiffer>false</organismsDiffer>
    <experiments>3</experiments>
</comment>
<comment type="interaction">
    <interactant intactId="EBI-1046170">
        <id>O95470</id>
    </interactant>
    <interactant intactId="EBI-12201693">
        <id>Q8N128-2</id>
        <label>FAM177A1</label>
    </interactant>
    <organismsDiffer>false</organismsDiffer>
    <experiments>3</experiments>
</comment>
<comment type="interaction">
    <interactant intactId="EBI-1046170">
        <id>O95470</id>
    </interactant>
    <interactant intactId="EBI-12175685">
        <id>Q14802-3</id>
        <label>FXYD3</label>
    </interactant>
    <organismsDiffer>false</organismsDiffer>
    <experiments>3</experiments>
</comment>
<comment type="interaction">
    <interactant intactId="EBI-1046170">
        <id>O95470</id>
    </interactant>
    <interactant intactId="EBI-712096">
        <id>P30519</id>
        <label>HMOX2</label>
    </interactant>
    <organismsDiffer>false</organismsDiffer>
    <experiments>3</experiments>
</comment>
<comment type="interaction">
    <interactant intactId="EBI-1046170">
        <id>O95470</id>
    </interactant>
    <interactant intactId="EBI-7932862">
        <id>Q01628</id>
        <label>IFITM3</label>
    </interactant>
    <organismsDiffer>false</organismsDiffer>
    <experiments>3</experiments>
</comment>
<comment type="interaction">
    <interactant intactId="EBI-1046170">
        <id>O95470</id>
    </interactant>
    <interactant intactId="EBI-2341610">
        <id>Q9NX47</id>
        <label>MARCHF5</label>
    </interactant>
    <organismsDiffer>false</organismsDiffer>
    <experiments>3</experiments>
</comment>
<comment type="interaction">
    <interactant intactId="EBI-1046170">
        <id>O95470</id>
    </interactant>
    <interactant intactId="EBI-2858252">
        <id>Q6ZSS7</id>
        <label>MFSD6</label>
    </interactant>
    <organismsDiffer>false</organismsDiffer>
    <experiments>3</experiments>
</comment>
<comment type="interaction">
    <interactant intactId="EBI-1046170">
        <id>O95470</id>
    </interactant>
    <interactant intactId="EBI-8449636">
        <id>P30301</id>
        <label>MIP</label>
    </interactant>
    <organismsDiffer>false</organismsDiffer>
    <experiments>3</experiments>
</comment>
<comment type="interaction">
    <interactant intactId="EBI-1046170">
        <id>O95470</id>
    </interactant>
    <interactant intactId="EBI-13349813">
        <id>Q8IY49-2</id>
        <label>MMD2</label>
    </interactant>
    <organismsDiffer>false</organismsDiffer>
    <experiments>3</experiments>
</comment>
<comment type="interaction">
    <interactant intactId="EBI-1046170">
        <id>O95470</id>
    </interactant>
    <interactant intactId="EBI-10316423">
        <id>Q9NXK6</id>
        <label>PAQR5</label>
    </interactant>
    <organismsDiffer>false</organismsDiffer>
    <experiments>3</experiments>
</comment>
<comment type="interaction">
    <interactant intactId="EBI-1046170">
        <id>O95470</id>
    </interactant>
    <interactant intactId="EBI-608347">
        <id>Q04941</id>
        <label>PLP2</label>
    </interactant>
    <organismsDiffer>false</organismsDiffer>
    <experiments>3</experiments>
</comment>
<comment type="interaction">
    <interactant intactId="EBI-1046170">
        <id>O95470</id>
    </interactant>
    <interactant intactId="EBI-10485931">
        <id>Q5VZY2</id>
        <label>PLPP4</label>
    </interactant>
    <organismsDiffer>false</organismsDiffer>
    <experiments>3</experiments>
</comment>
<comment type="interaction">
    <interactant intactId="EBI-1046170">
        <id>O95470</id>
    </interactant>
    <interactant intactId="EBI-12423312">
        <id>Q5GAN6</id>
        <label>RNASE10</label>
    </interactant>
    <organismsDiffer>false</organismsDiffer>
    <experiments>3</experiments>
</comment>
<comment type="interaction">
    <interactant intactId="EBI-1046170">
        <id>O95470</id>
    </interactant>
    <interactant intactId="EBI-10244780">
        <id>Q5QGT7</id>
        <label>RTP2</label>
    </interactant>
    <organismsDiffer>false</organismsDiffer>
    <experiments>3</experiments>
</comment>
<comment type="interaction">
    <interactant intactId="EBI-1046170">
        <id>O95470</id>
    </interactant>
    <interactant intactId="EBI-2695784">
        <id>Q8TAC9</id>
        <label>SCAMP5</label>
    </interactant>
    <organismsDiffer>false</organismsDiffer>
    <experiments>3</experiments>
</comment>
<comment type="interaction">
    <interactant intactId="EBI-1046170">
        <id>O95470</id>
    </interactant>
    <interactant intactId="EBI-10294651">
        <id>Q99726</id>
        <label>SLC30A3</label>
    </interactant>
    <organismsDiffer>false</organismsDiffer>
    <experiments>3</experiments>
</comment>
<comment type="interaction">
    <interactant intactId="EBI-1046170">
        <id>O95470</id>
    </interactant>
    <interactant intactId="EBI-738687">
        <id>P02808</id>
        <label>STATH</label>
    </interactant>
    <organismsDiffer>false</organismsDiffer>
    <experiments>3</experiments>
</comment>
<comment type="interaction">
    <interactant intactId="EBI-1046170">
        <id>O95470</id>
    </interactant>
    <interactant intactId="EBI-2800345">
        <id>Q86WV6</id>
        <label>STING1</label>
    </interactant>
    <organismsDiffer>false</organismsDiffer>
    <experiments>2</experiments>
</comment>
<comment type="interaction">
    <interactant intactId="EBI-1046170">
        <id>O95470</id>
    </interactant>
    <interactant intactId="EBI-744942">
        <id>Q12846</id>
        <label>STX4</label>
    </interactant>
    <organismsDiffer>false</organismsDiffer>
    <experiments>3</experiments>
</comment>
<comment type="interaction">
    <interactant intactId="EBI-1046170">
        <id>O95470</id>
    </interactant>
    <interactant intactId="EBI-727240">
        <id>Q9UNK0</id>
        <label>STX8</label>
    </interactant>
    <organismsDiffer>false</organismsDiffer>
    <experiments>3</experiments>
</comment>
<comment type="interaction">
    <interactant intactId="EBI-1046170">
        <id>O95470</id>
    </interactant>
    <interactant intactId="EBI-2800645">
        <id>Q96HP8</id>
        <label>TMEM176A</label>
    </interactant>
    <organismsDiffer>false</organismsDiffer>
    <experiments>3</experiments>
</comment>
<comment type="interaction">
    <interactant intactId="EBI-1046170">
        <id>O95470</id>
    </interactant>
    <interactant intactId="EBI-10315004">
        <id>Q9NWH2</id>
        <label>TMEM242</label>
    </interactant>
    <organismsDiffer>false</organismsDiffer>
    <experiments>3</experiments>
</comment>
<comment type="interaction">
    <interactant intactId="EBI-1046170">
        <id>O95470</id>
    </interactant>
    <interactant intactId="EBI-12111910">
        <id>Q5BJF2</id>
        <label>TMEM97</label>
    </interactant>
    <organismsDiffer>false</organismsDiffer>
    <experiments>3</experiments>
</comment>
<comment type="interaction">
    <interactant intactId="EBI-1046170">
        <id>O95470</id>
    </interactant>
    <interactant intactId="EBI-8652667">
        <id>O14817</id>
        <label>TSPAN4</label>
    </interactant>
    <organismsDiffer>false</organismsDiffer>
    <experiments>3</experiments>
</comment>
<comment type="interaction">
    <interactant intactId="EBI-1046170">
        <id>O95470</id>
    </interactant>
    <interactant intactId="EBI-11988865">
        <id>A5PKU2</id>
        <label>TUSC5</label>
    </interactant>
    <organismsDiffer>false</organismsDiffer>
    <experiments>3</experiments>
</comment>
<comment type="interaction">
    <interactant intactId="EBI-1046170">
        <id>O95470</id>
    </interactant>
    <interactant intactId="EBI-7601760">
        <id>Q53HI1</id>
        <label>UNC50</label>
    </interactant>
    <organismsDiffer>false</organismsDiffer>
    <experiments>3</experiments>
</comment>
<comment type="subcellular location">
    <subcellularLocation>
        <location evidence="5">Endoplasmic reticulum membrane</location>
        <topology evidence="3">Single-pass type III membrane protein</topology>
        <orientation evidence="1">Cytoplasmic side</orientation>
    </subcellularLocation>
</comment>
<comment type="tissue specificity">
    <text evidence="4 10">Ubiquitously expressed (PubMed:11018465, PubMed:28165343). Expressed in fetal and adult adrenal gland (at protein level) (PubMed:28165343).</text>
</comment>
<comment type="disease" evidence="9 10 11 12">
    <disease id="DI-05043">
        <name>RENI syndrome</name>
        <acronym>RENI</acronym>
        <description>An autosomal recessive, steroid-resistant nephrotic syndrome that manifests in infancy or early childhood, and progresses to end-stage renal failure within a few years. Additional clinical features include ichthyosis, adrenal insufficiency, immunodeficiency, and neurological defects. In rare cases, patients present with isolated primary adrenal insufficiency. Some patients present in utero with fetal hydrops and fetal demise.</description>
        <dbReference type="MIM" id="617575"/>
    </disease>
    <text>The disease is caused by variants affecting the gene represented in this entry.</text>
</comment>
<comment type="similarity">
    <text evidence="15">Belongs to the group II decarboxylase family. Sphingosine-1-phosphate lyase subfamily.</text>
</comment>
<comment type="sequence caution" evidence="15">
    <conflict type="erroneous initiation">
        <sequence resource="EMBL-CDS" id="BAA86566"/>
    </conflict>
    <text>Extended N-terminus.</text>
</comment>
<keyword id="KW-0002">3D-structure</keyword>
<keyword id="KW-0007">Acetylation</keyword>
<keyword id="KW-0053">Apoptosis</keyword>
<keyword id="KW-0225">Disease variant</keyword>
<keyword id="KW-0256">Endoplasmic reticulum</keyword>
<keyword id="KW-0443">Lipid metabolism</keyword>
<keyword id="KW-0456">Lyase</keyword>
<keyword id="KW-0472">Membrane</keyword>
<keyword id="KW-0944">Nitration</keyword>
<keyword id="KW-0597">Phosphoprotein</keyword>
<keyword id="KW-1267">Proteomics identification</keyword>
<keyword id="KW-0663">Pyridoxal phosphate</keyword>
<keyword id="KW-1185">Reference proteome</keyword>
<keyword id="KW-0735">Signal-anchor</keyword>
<keyword id="KW-0746">Sphingolipid metabolism</keyword>
<keyword id="KW-0812">Transmembrane</keyword>
<keyword id="KW-1133">Transmembrane helix</keyword>
<name>SGPL1_HUMAN</name>